<gene>
    <name type="ordered locus">At2g29880</name>
    <name type="ORF">F6K5.1</name>
</gene>
<proteinExistence type="evidence at transcript level"/>
<keyword id="KW-1185">Reference proteome</keyword>
<evidence type="ECO:0000256" key="1">
    <source>
        <dbReference type="SAM" id="MobiDB-lite"/>
    </source>
</evidence>
<feature type="chain" id="PRO_0000220603" description="Uncharacterized protein At2g29880">
    <location>
        <begin position="1"/>
        <end position="308"/>
    </location>
</feature>
<feature type="region of interest" description="Disordered" evidence="1">
    <location>
        <begin position="158"/>
        <end position="221"/>
    </location>
</feature>
<feature type="compositionally biased region" description="Basic and acidic residues" evidence="1">
    <location>
        <begin position="206"/>
        <end position="221"/>
    </location>
</feature>
<accession>O82368</accession>
<accession>Q1PEY9</accession>
<reference key="1">
    <citation type="journal article" date="1999" name="Nature">
        <title>Sequence and analysis of chromosome 2 of the plant Arabidopsis thaliana.</title>
        <authorList>
            <person name="Lin X."/>
            <person name="Kaul S."/>
            <person name="Rounsley S.D."/>
            <person name="Shea T.P."/>
            <person name="Benito M.-I."/>
            <person name="Town C.D."/>
            <person name="Fujii C.Y."/>
            <person name="Mason T.M."/>
            <person name="Bowman C.L."/>
            <person name="Barnstead M.E."/>
            <person name="Feldblyum T.V."/>
            <person name="Buell C.R."/>
            <person name="Ketchum K.A."/>
            <person name="Lee J.J."/>
            <person name="Ronning C.M."/>
            <person name="Koo H.L."/>
            <person name="Moffat K.S."/>
            <person name="Cronin L.A."/>
            <person name="Shen M."/>
            <person name="Pai G."/>
            <person name="Van Aken S."/>
            <person name="Umayam L."/>
            <person name="Tallon L.J."/>
            <person name="Gill J.E."/>
            <person name="Adams M.D."/>
            <person name="Carrera A.J."/>
            <person name="Creasy T.H."/>
            <person name="Goodman H.M."/>
            <person name="Somerville C.R."/>
            <person name="Copenhaver G.P."/>
            <person name="Preuss D."/>
            <person name="Nierman W.C."/>
            <person name="White O."/>
            <person name="Eisen J.A."/>
            <person name="Salzberg S.L."/>
            <person name="Fraser C.M."/>
            <person name="Venter J.C."/>
        </authorList>
    </citation>
    <scope>NUCLEOTIDE SEQUENCE [LARGE SCALE GENOMIC DNA]</scope>
    <source>
        <strain>cv. Columbia</strain>
    </source>
</reference>
<reference key="2">
    <citation type="journal article" date="2017" name="Plant J.">
        <title>Araport11: a complete reannotation of the Arabidopsis thaliana reference genome.</title>
        <authorList>
            <person name="Cheng C.Y."/>
            <person name="Krishnakumar V."/>
            <person name="Chan A.P."/>
            <person name="Thibaud-Nissen F."/>
            <person name="Schobel S."/>
            <person name="Town C.D."/>
        </authorList>
    </citation>
    <scope>GENOME REANNOTATION</scope>
    <source>
        <strain>cv. Columbia</strain>
    </source>
</reference>
<reference key="3">
    <citation type="journal article" date="2006" name="Plant Biotechnol. J.">
        <title>Simultaneous high-throughput recombinational cloning of open reading frames in closed and open configurations.</title>
        <authorList>
            <person name="Underwood B.A."/>
            <person name="Vanderhaeghen R."/>
            <person name="Whitford R."/>
            <person name="Town C.D."/>
            <person name="Hilson P."/>
        </authorList>
    </citation>
    <scope>NUCLEOTIDE SEQUENCE [LARGE SCALE MRNA]</scope>
    <source>
        <strain>cv. Columbia</strain>
    </source>
</reference>
<organism>
    <name type="scientific">Arabidopsis thaliana</name>
    <name type="common">Mouse-ear cress</name>
    <dbReference type="NCBI Taxonomy" id="3702"/>
    <lineage>
        <taxon>Eukaryota</taxon>
        <taxon>Viridiplantae</taxon>
        <taxon>Streptophyta</taxon>
        <taxon>Embryophyta</taxon>
        <taxon>Tracheophyta</taxon>
        <taxon>Spermatophyta</taxon>
        <taxon>Magnoliopsida</taxon>
        <taxon>eudicotyledons</taxon>
        <taxon>Gunneridae</taxon>
        <taxon>Pentapetalae</taxon>
        <taxon>rosids</taxon>
        <taxon>malvids</taxon>
        <taxon>Brassicales</taxon>
        <taxon>Brassicaceae</taxon>
        <taxon>Camelineae</taxon>
        <taxon>Arabidopsis</taxon>
    </lineage>
</organism>
<name>Y2988_ARATH</name>
<protein>
    <recommendedName>
        <fullName>Uncharacterized protein At2g29880</fullName>
    </recommendedName>
</protein>
<sequence>MESGDQAGETSKKKKKGPYMSWSDQECYELTAILVDAIKRGWRDKNGTISKTTVERKILPLLNKKFKCNKTYTNYLSRMKSMKKEYSVYAALFWFSSGFGWDPITKQFTAPDDVWAAYLMGHPNHHHMRTSTFEDFEDLQLIFESAIAKGNNAFGLGGDSNAETFEEEDDLQAGDNVNHMEINDDEVNETLPKEKLPTRKRSKTNRNGDRSDSINHGESSEKVLSEMIGVGTNIINLIQQREERHQREVEFRETEKKKNNVWDAIKEIPDLEDHIRYDAVTKIHTLNLKDVFVSMSVEERLGWIRRNT</sequence>
<dbReference type="EMBL" id="AC005496">
    <property type="protein sequence ID" value="AAM15055.1"/>
    <property type="molecule type" value="Genomic_DNA"/>
</dbReference>
<dbReference type="EMBL" id="AC007113">
    <property type="protein sequence ID" value="AAD23628.1"/>
    <property type="molecule type" value="Genomic_DNA"/>
</dbReference>
<dbReference type="EMBL" id="CP002685">
    <property type="protein sequence ID" value="AEC08314.1"/>
    <property type="molecule type" value="Genomic_DNA"/>
</dbReference>
<dbReference type="EMBL" id="DQ446578">
    <property type="protein sequence ID" value="ABE65872.1"/>
    <property type="molecule type" value="mRNA"/>
</dbReference>
<dbReference type="PIR" id="G84701">
    <property type="entry name" value="G84701"/>
</dbReference>
<dbReference type="RefSeq" id="NP_180549.1">
    <property type="nucleotide sequence ID" value="NM_128542.2"/>
</dbReference>
<dbReference type="SMR" id="O82368"/>
<dbReference type="BioGRID" id="2888">
    <property type="interactions" value="1"/>
</dbReference>
<dbReference type="STRING" id="3702.O82368"/>
<dbReference type="PaxDb" id="3702-AT2G29880.1"/>
<dbReference type="EnsemblPlants" id="AT2G29880.1">
    <property type="protein sequence ID" value="AT2G29880.1"/>
    <property type="gene ID" value="AT2G29880"/>
</dbReference>
<dbReference type="GeneID" id="817538"/>
<dbReference type="Gramene" id="AT2G29880.1">
    <property type="protein sequence ID" value="AT2G29880.1"/>
    <property type="gene ID" value="AT2G29880"/>
</dbReference>
<dbReference type="KEGG" id="ath:AT2G29880"/>
<dbReference type="Araport" id="AT2G29880"/>
<dbReference type="TAIR" id="AT2G29880"/>
<dbReference type="eggNOG" id="ENOG502SJU1">
    <property type="taxonomic scope" value="Eukaryota"/>
</dbReference>
<dbReference type="HOGENOM" id="CLU_078908_0_0_1"/>
<dbReference type="InParanoid" id="O82368"/>
<dbReference type="OMA" id="QPRCENA"/>
<dbReference type="PhylomeDB" id="O82368"/>
<dbReference type="PRO" id="PR:O82368"/>
<dbReference type="Proteomes" id="UP000006548">
    <property type="component" value="Chromosome 2"/>
</dbReference>
<dbReference type="ExpressionAtlas" id="O82368">
    <property type="expression patterns" value="baseline and differential"/>
</dbReference>
<dbReference type="InterPro" id="IPR055314">
    <property type="entry name" value="At2g29880-like"/>
</dbReference>
<dbReference type="InterPro" id="IPR056253">
    <property type="entry name" value="At2g29880-like_C"/>
</dbReference>
<dbReference type="InterPro" id="IPR024752">
    <property type="entry name" value="Myb/SANT-like_dom"/>
</dbReference>
<dbReference type="PANTHER" id="PTHR47864:SF12">
    <property type="entry name" value="MYB_SANT-LIKE DOMAIN-CONTAINING PROTEIN"/>
    <property type="match status" value="1"/>
</dbReference>
<dbReference type="PANTHER" id="PTHR47864">
    <property type="entry name" value="TRANSMEMBRANE PROTEIN"/>
    <property type="match status" value="1"/>
</dbReference>
<dbReference type="Pfam" id="PF24769">
    <property type="entry name" value="At2g29880_C"/>
    <property type="match status" value="1"/>
</dbReference>
<dbReference type="Pfam" id="PF12776">
    <property type="entry name" value="Myb_DNA-bind_3"/>
    <property type="match status" value="1"/>
</dbReference>